<organism>
    <name type="scientific">Staphylococcus saprophyticus subsp. saprophyticus (strain ATCC 15305 / DSM 20229 / NCIMB 8711 / NCTC 7292 / S-41)</name>
    <dbReference type="NCBI Taxonomy" id="342451"/>
    <lineage>
        <taxon>Bacteria</taxon>
        <taxon>Bacillati</taxon>
        <taxon>Bacillota</taxon>
        <taxon>Bacilli</taxon>
        <taxon>Bacillales</taxon>
        <taxon>Staphylococcaceae</taxon>
        <taxon>Staphylococcus</taxon>
    </lineage>
</organism>
<feature type="chain" id="PRO_0000267208" description="Thioredoxin">
    <location>
        <begin position="1"/>
        <end position="104"/>
    </location>
</feature>
<feature type="domain" description="Thioredoxin" evidence="2">
    <location>
        <begin position="2"/>
        <end position="104"/>
    </location>
</feature>
<feature type="disulfide bond" description="Redox-active" evidence="2">
    <location>
        <begin position="29"/>
        <end position="32"/>
    </location>
</feature>
<proteinExistence type="inferred from homology"/>
<protein>
    <recommendedName>
        <fullName>Thioredoxin</fullName>
        <shortName>Trx</shortName>
    </recommendedName>
</protein>
<sequence>MAIVKVTDSNFDDNIQSGVNLVDFWATWCGPCKMIAPVLEELAGDYDGKANILKLDVDENPSTAAKFEVMSIPTLIVFKDGEPVDKVVGFQPKENLAEVIEKHL</sequence>
<accession>Q49WR2</accession>
<name>THIO_STAS1</name>
<evidence type="ECO:0000250" key="1"/>
<evidence type="ECO:0000255" key="2">
    <source>
        <dbReference type="PROSITE-ProRule" id="PRU00691"/>
    </source>
</evidence>
<evidence type="ECO:0000305" key="3"/>
<gene>
    <name type="primary">trxA</name>
    <name type="ordered locus">SSP1650</name>
</gene>
<keyword id="KW-1015">Disulfide bond</keyword>
<keyword id="KW-0249">Electron transport</keyword>
<keyword id="KW-0676">Redox-active center</keyword>
<keyword id="KW-1185">Reference proteome</keyword>
<keyword id="KW-0813">Transport</keyword>
<reference key="1">
    <citation type="journal article" date="2005" name="Proc. Natl. Acad. Sci. U.S.A.">
        <title>Whole genome sequence of Staphylococcus saprophyticus reveals the pathogenesis of uncomplicated urinary tract infection.</title>
        <authorList>
            <person name="Kuroda M."/>
            <person name="Yamashita A."/>
            <person name="Hirakawa H."/>
            <person name="Kumano M."/>
            <person name="Morikawa K."/>
            <person name="Higashide M."/>
            <person name="Maruyama A."/>
            <person name="Inose Y."/>
            <person name="Matoba K."/>
            <person name="Toh H."/>
            <person name="Kuhara S."/>
            <person name="Hattori M."/>
            <person name="Ohta T."/>
        </authorList>
    </citation>
    <scope>NUCLEOTIDE SEQUENCE [LARGE SCALE GENOMIC DNA]</scope>
    <source>
        <strain>ATCC 15305 / DSM 20229 / NCIMB 8711 / NCTC 7292 / S-41</strain>
    </source>
</reference>
<dbReference type="EMBL" id="AP008934">
    <property type="protein sequence ID" value="BAE18795.1"/>
    <property type="molecule type" value="Genomic_DNA"/>
</dbReference>
<dbReference type="RefSeq" id="WP_011303383.1">
    <property type="nucleotide sequence ID" value="NZ_MTGA01000039.1"/>
</dbReference>
<dbReference type="SMR" id="Q49WR2"/>
<dbReference type="GeneID" id="3615140"/>
<dbReference type="KEGG" id="ssp:SSP1650"/>
<dbReference type="PATRIC" id="fig|342451.11.peg.1649"/>
<dbReference type="eggNOG" id="COG3118">
    <property type="taxonomic scope" value="Bacteria"/>
</dbReference>
<dbReference type="HOGENOM" id="CLU_090389_10_2_9"/>
<dbReference type="OrthoDB" id="9790390at2"/>
<dbReference type="Proteomes" id="UP000006371">
    <property type="component" value="Chromosome"/>
</dbReference>
<dbReference type="GO" id="GO:0005829">
    <property type="term" value="C:cytosol"/>
    <property type="evidence" value="ECO:0007669"/>
    <property type="project" value="TreeGrafter"/>
</dbReference>
<dbReference type="GO" id="GO:0015035">
    <property type="term" value="F:protein-disulfide reductase activity"/>
    <property type="evidence" value="ECO:0007669"/>
    <property type="project" value="InterPro"/>
</dbReference>
<dbReference type="GO" id="GO:0045454">
    <property type="term" value="P:cell redox homeostasis"/>
    <property type="evidence" value="ECO:0007669"/>
    <property type="project" value="TreeGrafter"/>
</dbReference>
<dbReference type="CDD" id="cd02947">
    <property type="entry name" value="TRX_family"/>
    <property type="match status" value="1"/>
</dbReference>
<dbReference type="FunFam" id="3.40.30.10:FF:000001">
    <property type="entry name" value="Thioredoxin"/>
    <property type="match status" value="1"/>
</dbReference>
<dbReference type="Gene3D" id="3.40.30.10">
    <property type="entry name" value="Glutaredoxin"/>
    <property type="match status" value="1"/>
</dbReference>
<dbReference type="InterPro" id="IPR005746">
    <property type="entry name" value="Thioredoxin"/>
</dbReference>
<dbReference type="InterPro" id="IPR036249">
    <property type="entry name" value="Thioredoxin-like_sf"/>
</dbReference>
<dbReference type="InterPro" id="IPR017937">
    <property type="entry name" value="Thioredoxin_CS"/>
</dbReference>
<dbReference type="InterPro" id="IPR013766">
    <property type="entry name" value="Thioredoxin_domain"/>
</dbReference>
<dbReference type="NCBIfam" id="TIGR01068">
    <property type="entry name" value="thioredoxin"/>
    <property type="match status" value="1"/>
</dbReference>
<dbReference type="PANTHER" id="PTHR45663">
    <property type="entry name" value="GEO12009P1"/>
    <property type="match status" value="1"/>
</dbReference>
<dbReference type="PANTHER" id="PTHR45663:SF11">
    <property type="entry name" value="GEO12009P1"/>
    <property type="match status" value="1"/>
</dbReference>
<dbReference type="Pfam" id="PF00085">
    <property type="entry name" value="Thioredoxin"/>
    <property type="match status" value="1"/>
</dbReference>
<dbReference type="PIRSF" id="PIRSF000077">
    <property type="entry name" value="Thioredoxin"/>
    <property type="match status" value="1"/>
</dbReference>
<dbReference type="PRINTS" id="PR00421">
    <property type="entry name" value="THIOREDOXIN"/>
</dbReference>
<dbReference type="SUPFAM" id="SSF52833">
    <property type="entry name" value="Thioredoxin-like"/>
    <property type="match status" value="1"/>
</dbReference>
<dbReference type="PROSITE" id="PS00194">
    <property type="entry name" value="THIOREDOXIN_1"/>
    <property type="match status" value="1"/>
</dbReference>
<dbReference type="PROSITE" id="PS51352">
    <property type="entry name" value="THIOREDOXIN_2"/>
    <property type="match status" value="1"/>
</dbReference>
<comment type="function">
    <text evidence="1">Component of the thioredoxin-thioredoxin reductase system. Participates in various redox reactions through the reversible oxidation of its active center dithiol to a disulfide and catalyzes dithiol-disulfide exchange reactions (By similarity).</text>
</comment>
<comment type="similarity">
    <text evidence="3">Belongs to the thioredoxin family.</text>
</comment>